<proteinExistence type="inferred from homology"/>
<evidence type="ECO:0000250" key="1"/>
<evidence type="ECO:0000255" key="2"/>
<evidence type="ECO:0000305" key="3"/>
<comment type="function">
    <text evidence="1">Component of the spindle pole body (SPB) required for the proper execution of spindle pole body (SPB) duplication. Potential role in cross-linking filaments or anchoring other molecules. It is essential for growth (By similarity).</text>
</comment>
<comment type="subunit">
    <text evidence="1">Homodimer.</text>
</comment>
<comment type="subcellular location">
    <subcellularLocation>
        <location evidence="1">Nucleus</location>
    </subcellularLocation>
    <subcellularLocation>
        <location evidence="1">Cytoplasm</location>
        <location evidence="1">Cytoskeleton</location>
        <location evidence="1">Microtubule organizing center</location>
        <location evidence="1">Spindle pole body</location>
    </subcellularLocation>
    <text evidence="1">Tightly associated with the nucleus. It is present in a granular pattern that excludes the nucleolus.</text>
</comment>
<comment type="similarity">
    <text evidence="3">Belongs to the SPC110 family.</text>
</comment>
<keyword id="KW-0175">Coiled coil</keyword>
<keyword id="KW-0963">Cytoplasm</keyword>
<keyword id="KW-0206">Cytoskeleton</keyword>
<keyword id="KW-0539">Nucleus</keyword>
<keyword id="KW-1185">Reference proteome</keyword>
<feature type="chain" id="PRO_0000409198" description="Spindle pole body component 110">
    <location>
        <begin position="1"/>
        <end position="852"/>
    </location>
</feature>
<feature type="coiled-coil region" evidence="2">
    <location>
        <begin position="158"/>
        <end position="711"/>
    </location>
</feature>
<organism>
    <name type="scientific">Eremothecium gossypii (strain ATCC 10895 / CBS 109.51 / FGSC 9923 / NRRL Y-1056)</name>
    <name type="common">Yeast</name>
    <name type="synonym">Ashbya gossypii</name>
    <dbReference type="NCBI Taxonomy" id="284811"/>
    <lineage>
        <taxon>Eukaryota</taxon>
        <taxon>Fungi</taxon>
        <taxon>Dikarya</taxon>
        <taxon>Ascomycota</taxon>
        <taxon>Saccharomycotina</taxon>
        <taxon>Saccharomycetes</taxon>
        <taxon>Saccharomycetales</taxon>
        <taxon>Saccharomycetaceae</taxon>
        <taxon>Eremothecium</taxon>
    </lineage>
</organism>
<accession>Q756L3</accession>
<dbReference type="EMBL" id="AE016818">
    <property type="protein sequence ID" value="AAS52922.1"/>
    <property type="molecule type" value="Genomic_DNA"/>
</dbReference>
<dbReference type="RefSeq" id="NP_985098.1">
    <property type="nucleotide sequence ID" value="NM_210452.1"/>
</dbReference>
<dbReference type="SMR" id="Q756L3"/>
<dbReference type="FunCoup" id="Q756L3">
    <property type="interactions" value="340"/>
</dbReference>
<dbReference type="EnsemblFungi" id="AAS52922">
    <property type="protein sequence ID" value="AAS52922"/>
    <property type="gene ID" value="AGOS_AER241W"/>
</dbReference>
<dbReference type="GeneID" id="4621308"/>
<dbReference type="KEGG" id="ago:AGOS_AER241W"/>
<dbReference type="eggNOG" id="ENOG502QUTQ">
    <property type="taxonomic scope" value="Eukaryota"/>
</dbReference>
<dbReference type="HOGENOM" id="CLU_329279_0_0_1"/>
<dbReference type="InParanoid" id="Q756L3"/>
<dbReference type="OMA" id="MENASNK"/>
<dbReference type="OrthoDB" id="10255522at2759"/>
<dbReference type="Proteomes" id="UP000000591">
    <property type="component" value="Chromosome V"/>
</dbReference>
<dbReference type="GO" id="GO:0000785">
    <property type="term" value="C:chromatin"/>
    <property type="evidence" value="ECO:0000318"/>
    <property type="project" value="GO_Central"/>
</dbReference>
<dbReference type="GO" id="GO:0000793">
    <property type="term" value="C:condensed chromosome"/>
    <property type="evidence" value="ECO:0000318"/>
    <property type="project" value="GO_Central"/>
</dbReference>
<dbReference type="GO" id="GO:0000796">
    <property type="term" value="C:condensin complex"/>
    <property type="evidence" value="ECO:0000318"/>
    <property type="project" value="GO_Central"/>
</dbReference>
<dbReference type="GO" id="GO:0005737">
    <property type="term" value="C:cytoplasm"/>
    <property type="evidence" value="ECO:0007669"/>
    <property type="project" value="UniProtKB-KW"/>
</dbReference>
<dbReference type="GO" id="GO:0005634">
    <property type="term" value="C:nucleus"/>
    <property type="evidence" value="ECO:0007669"/>
    <property type="project" value="UniProtKB-SubCell"/>
</dbReference>
<dbReference type="GO" id="GO:0005816">
    <property type="term" value="C:spindle pole body"/>
    <property type="evidence" value="ECO:0007669"/>
    <property type="project" value="UniProtKB-SubCell"/>
</dbReference>
<dbReference type="GO" id="GO:0003682">
    <property type="term" value="F:chromatin binding"/>
    <property type="evidence" value="ECO:0000318"/>
    <property type="project" value="GO_Central"/>
</dbReference>
<dbReference type="GO" id="GO:0007076">
    <property type="term" value="P:mitotic chromosome condensation"/>
    <property type="evidence" value="ECO:0000318"/>
    <property type="project" value="GO_Central"/>
</dbReference>
<dbReference type="Gene3D" id="1.10.287.1490">
    <property type="match status" value="1"/>
</dbReference>
<dbReference type="Gene3D" id="6.10.310.10">
    <property type="match status" value="1"/>
</dbReference>
<dbReference type="InterPro" id="IPR041112">
    <property type="entry name" value="Nuf2_DHR10-like"/>
</dbReference>
<dbReference type="InterPro" id="IPR040593">
    <property type="entry name" value="Spc110_C"/>
</dbReference>
<dbReference type="Pfam" id="PF18595">
    <property type="entry name" value="Nuf2_DHR10-like"/>
    <property type="match status" value="1"/>
</dbReference>
<dbReference type="Pfam" id="PF18520">
    <property type="entry name" value="Spc110_C"/>
    <property type="match status" value="1"/>
</dbReference>
<sequence>MFASLDTPAVHQRKKYEFTPIGHIKEKENMIAQELRQNKRPPLEDEEDAAIEGNYMKRTRVGDDTMNSQQLFNETSFDDTLPEQTLQGISAIKKNLAPELLSNDNKEKAELASNPLKEQQHALQKLNMENYSLRVKCNSLLKFLNNVTDDGKLKQGLEMLDELQEWKTKHHELIQRFKELQLRYDELEQREPEPLKVAEPADHSHCEKLRAELETSLKETRSQLDEVQATVSTLEKRLVEVKKDYSEKEHQYKMSLDIAKSENNRLTSSLSSREDALNEAQEKINRLMVQLEEFDHTSGSLLELEKKIDDKNQGIRNLETRLQELNFHRQDLERQLLTANETIEALKKEHEEYREQNELKLTSLHKNTSGEDRLRKQLRDLAEDKEGLQKLRQTLEERNKELDERVEALESQVAAIEEDRQKIIGEQQQVVRNLKLEHQKRAQNLKREIEELRELNQQLEETNRSYKKRFEHFSRNSPARKATQEELTAKDREIGALKRTIRDIEESVLRTTRELETAKIQHRREKSMLEARLDQAASEEPFERSRLEKEISMLKLEIRSIQDTKERELSLWESKYESLKNTYEKLLQQDKHSNLNEILEDRREELKSLMKKYNDLTTENLELTRELNKQKSHKEAYKEDLRKVQARLDFITKEFVKLKESAPEPKDSSDELNSKWMEKYQNMKIKLLNELKVLQDENIQLERRLLDRSQQQSHNLAETPTQSRDSSLQDKVDYYRLKYHDEVRKNNDLRVINEYLNRVLKASSQHLKLDILKLENEISPLNSSTTYINDYDYSYAPSYYSRRGRPLKFKTVAIFVLSCIRMYQATLRRRWDQQRINYLQRKIAYGEDRITW</sequence>
<gene>
    <name type="primary">SPC110</name>
    <name type="ordered locus">AER241W</name>
</gene>
<name>SP110_EREGS</name>
<reference key="1">
    <citation type="journal article" date="2004" name="Science">
        <title>The Ashbya gossypii genome as a tool for mapping the ancient Saccharomyces cerevisiae genome.</title>
        <authorList>
            <person name="Dietrich F.S."/>
            <person name="Voegeli S."/>
            <person name="Brachat S."/>
            <person name="Lerch A."/>
            <person name="Gates K."/>
            <person name="Steiner S."/>
            <person name="Mohr C."/>
            <person name="Poehlmann R."/>
            <person name="Luedi P."/>
            <person name="Choi S."/>
            <person name="Wing R.A."/>
            <person name="Flavier A."/>
            <person name="Gaffney T.D."/>
            <person name="Philippsen P."/>
        </authorList>
    </citation>
    <scope>NUCLEOTIDE SEQUENCE [LARGE SCALE GENOMIC DNA]</scope>
    <source>
        <strain>ATCC 10895 / CBS 109.51 / FGSC 9923 / NRRL Y-1056</strain>
    </source>
</reference>
<reference key="2">
    <citation type="journal article" date="2013" name="G3 (Bethesda)">
        <title>Genomes of Ashbya fungi isolated from insects reveal four mating-type loci, numerous translocations, lack of transposons, and distinct gene duplications.</title>
        <authorList>
            <person name="Dietrich F.S."/>
            <person name="Voegeli S."/>
            <person name="Kuo S."/>
            <person name="Philippsen P."/>
        </authorList>
    </citation>
    <scope>GENOME REANNOTATION</scope>
    <source>
        <strain>ATCC 10895 / CBS 109.51 / FGSC 9923 / NRRL Y-1056</strain>
    </source>
</reference>
<protein>
    <recommendedName>
        <fullName>Spindle pole body component 110</fullName>
    </recommendedName>
    <alternativeName>
        <fullName>Spindle pole body spacer protein SPC110</fullName>
    </alternativeName>
</protein>